<proteinExistence type="evidence at protein level"/>
<protein>
    <recommendedName>
        <fullName>Large ribosomal subunit protein eL22</fullName>
    </recommendedName>
    <alternativeName>
        <fullName>60S ribosomal protein L22</fullName>
    </alternativeName>
</protein>
<gene>
    <name type="primary">RPL22</name>
</gene>
<feature type="initiator methionine" description="Removed" evidence="1">
    <location>
        <position position="1"/>
    </location>
</feature>
<feature type="chain" id="PRO_0000460110" description="Large ribosomal subunit protein eL22">
    <location>
        <begin position="2"/>
        <end position="128"/>
    </location>
</feature>
<feature type="modified residue" description="Phosphothreonine" evidence="2">
    <location>
        <position position="62"/>
    </location>
</feature>
<feature type="modified residue" description="Phosphoserine" evidence="1">
    <location>
        <position position="66"/>
    </location>
</feature>
<feature type="modified residue" description="N6-succinyllysine" evidence="2">
    <location>
        <position position="69"/>
    </location>
</feature>
<evidence type="ECO:0000250" key="1">
    <source>
        <dbReference type="UniProtKB" id="P35268"/>
    </source>
</evidence>
<evidence type="ECO:0000250" key="2">
    <source>
        <dbReference type="UniProtKB" id="P67984"/>
    </source>
</evidence>
<evidence type="ECO:0000269" key="3">
    <source>
    </source>
</evidence>
<evidence type="ECO:0000269" key="4">
    <source>
    </source>
</evidence>
<evidence type="ECO:0000269" key="5">
    <source>
    </source>
</evidence>
<evidence type="ECO:0000269" key="6">
    <source>
    </source>
</evidence>
<evidence type="ECO:0000305" key="7"/>
<evidence type="ECO:0007744" key="8">
    <source>
        <dbReference type="PDB" id="6D90"/>
    </source>
</evidence>
<evidence type="ECO:0007744" key="9">
    <source>
        <dbReference type="PDB" id="6P5I"/>
    </source>
</evidence>
<evidence type="ECO:0007744" key="10">
    <source>
        <dbReference type="PDB" id="6P5J"/>
    </source>
</evidence>
<evidence type="ECO:0007744" key="11">
    <source>
        <dbReference type="PDB" id="6R6P"/>
    </source>
</evidence>
<evidence type="ECO:0007744" key="12">
    <source>
        <dbReference type="PDB" id="6ZVK"/>
    </source>
</evidence>
<evidence type="ECO:0007744" key="13">
    <source>
        <dbReference type="PDB" id="7A01"/>
    </source>
</evidence>
<dbReference type="EMBL" id="AAGW02040093">
    <property type="status" value="NOT_ANNOTATED_CDS"/>
    <property type="molecule type" value="Genomic_DNA"/>
</dbReference>
<dbReference type="RefSeq" id="XP_002719542.1">
    <property type="nucleotide sequence ID" value="XM_002719496.3"/>
</dbReference>
<dbReference type="PDB" id="6D90">
    <property type="method" value="EM"/>
    <property type="resolution" value="3.20 A"/>
    <property type="chains" value="U=1-128"/>
</dbReference>
<dbReference type="PDB" id="6FTJ">
    <property type="method" value="EM"/>
    <property type="resolution" value="4.70 A"/>
    <property type="chains" value="U=17-115"/>
</dbReference>
<dbReference type="PDB" id="6P5I">
    <property type="method" value="EM"/>
    <property type="resolution" value="3.10 A"/>
    <property type="chains" value="AU=1-128"/>
</dbReference>
<dbReference type="PDB" id="6P5J">
    <property type="method" value="EM"/>
    <property type="resolution" value="3.10 A"/>
    <property type="chains" value="AU=1-128"/>
</dbReference>
<dbReference type="PDB" id="6P5K">
    <property type="method" value="EM"/>
    <property type="resolution" value="3.10 A"/>
    <property type="chains" value="AU=1-128"/>
</dbReference>
<dbReference type="PDB" id="6P5N">
    <property type="method" value="EM"/>
    <property type="resolution" value="3.20 A"/>
    <property type="chains" value="AU=1-128"/>
</dbReference>
<dbReference type="PDB" id="6R6P">
    <property type="method" value="EM"/>
    <property type="resolution" value="3.10 A"/>
    <property type="chains" value="U=17-115"/>
</dbReference>
<dbReference type="PDB" id="6ZVK">
    <property type="method" value="EM"/>
    <property type="resolution" value="3.49 A"/>
    <property type="chains" value="82=17-115"/>
</dbReference>
<dbReference type="PDB" id="7A01">
    <property type="method" value="EM"/>
    <property type="resolution" value="3.60 A"/>
    <property type="chains" value="82=17-115"/>
</dbReference>
<dbReference type="PDB" id="7MDZ">
    <property type="method" value="EM"/>
    <property type="resolution" value="3.20 A"/>
    <property type="chains" value="U=1-128"/>
</dbReference>
<dbReference type="PDB" id="7NFX">
    <property type="method" value="EM"/>
    <property type="resolution" value="3.20 A"/>
    <property type="chains" value="U=17-115"/>
</dbReference>
<dbReference type="PDB" id="7OBR">
    <property type="method" value="EM"/>
    <property type="resolution" value="2.80 A"/>
    <property type="chains" value="U=17-115"/>
</dbReference>
<dbReference type="PDB" id="7TM3">
    <property type="method" value="EM"/>
    <property type="resolution" value="3.25 A"/>
    <property type="chains" value="U=1-128"/>
</dbReference>
<dbReference type="PDB" id="7TUT">
    <property type="method" value="EM"/>
    <property type="resolution" value="3.88 A"/>
    <property type="chains" value="U=1-128"/>
</dbReference>
<dbReference type="PDB" id="8B5L">
    <property type="method" value="EM"/>
    <property type="resolution" value="2.86 A"/>
    <property type="chains" value="U=17-115"/>
</dbReference>
<dbReference type="PDB" id="8B6C">
    <property type="method" value="EM"/>
    <property type="resolution" value="2.79 A"/>
    <property type="chains" value="U=17-115"/>
</dbReference>
<dbReference type="PDB" id="8BTK">
    <property type="method" value="EM"/>
    <property type="resolution" value="3.50 A"/>
    <property type="chains" value="BU=1-128"/>
</dbReference>
<dbReference type="PDB" id="8P2K">
    <property type="method" value="EM"/>
    <property type="resolution" value="2.90 A"/>
    <property type="chains" value="BU=1-128"/>
</dbReference>
<dbReference type="PDB" id="8RJB">
    <property type="method" value="EM"/>
    <property type="resolution" value="2.69 A"/>
    <property type="chains" value="U=1-128"/>
</dbReference>
<dbReference type="PDB" id="8RJC">
    <property type="method" value="EM"/>
    <property type="resolution" value="2.90 A"/>
    <property type="chains" value="U=1-128"/>
</dbReference>
<dbReference type="PDB" id="8SCB">
    <property type="method" value="EM"/>
    <property type="resolution" value="2.50 A"/>
    <property type="chains" value="U=1-128"/>
</dbReference>
<dbReference type="PDB" id="8VFT">
    <property type="method" value="EM"/>
    <property type="resolution" value="3.30 A"/>
    <property type="chains" value="U=1-128"/>
</dbReference>
<dbReference type="PDB" id="9BDL">
    <property type="method" value="EM"/>
    <property type="resolution" value="2.80 A"/>
    <property type="chains" value="AL22=17-115"/>
</dbReference>
<dbReference type="PDB" id="9BDN">
    <property type="method" value="EM"/>
    <property type="resolution" value="3.10 A"/>
    <property type="chains" value="AL22=17-115"/>
</dbReference>
<dbReference type="PDB" id="9BDP">
    <property type="method" value="EM"/>
    <property type="resolution" value="3.70 A"/>
    <property type="chains" value="AL22=17-115"/>
</dbReference>
<dbReference type="PDB" id="9F1B">
    <property type="method" value="EM"/>
    <property type="resolution" value="3.01 A"/>
    <property type="chains" value="BU=1-128"/>
</dbReference>
<dbReference type="PDB" id="9F1C">
    <property type="method" value="EM"/>
    <property type="resolution" value="3.78 A"/>
    <property type="chains" value="BU=1-128"/>
</dbReference>
<dbReference type="PDB" id="9F1D">
    <property type="method" value="EM"/>
    <property type="resolution" value="3.26 A"/>
    <property type="chains" value="BU=1-128"/>
</dbReference>
<dbReference type="PDBsum" id="6D90"/>
<dbReference type="PDBsum" id="6FTJ"/>
<dbReference type="PDBsum" id="6P5I"/>
<dbReference type="PDBsum" id="6P5J"/>
<dbReference type="PDBsum" id="6P5K"/>
<dbReference type="PDBsum" id="6P5N"/>
<dbReference type="PDBsum" id="6R6P"/>
<dbReference type="PDBsum" id="6ZVK"/>
<dbReference type="PDBsum" id="7A01"/>
<dbReference type="PDBsum" id="7MDZ"/>
<dbReference type="PDBsum" id="7NFX"/>
<dbReference type="PDBsum" id="7OBR"/>
<dbReference type="PDBsum" id="7TM3"/>
<dbReference type="PDBsum" id="7TUT"/>
<dbReference type="PDBsum" id="8B5L"/>
<dbReference type="PDBsum" id="8B6C"/>
<dbReference type="PDBsum" id="8BTK"/>
<dbReference type="PDBsum" id="8P2K"/>
<dbReference type="PDBsum" id="8RJB"/>
<dbReference type="PDBsum" id="8RJC"/>
<dbReference type="PDBsum" id="8SCB"/>
<dbReference type="PDBsum" id="8VFT"/>
<dbReference type="PDBsum" id="9BDL"/>
<dbReference type="PDBsum" id="9BDN"/>
<dbReference type="PDBsum" id="9BDP"/>
<dbReference type="PDBsum" id="9F1B"/>
<dbReference type="PDBsum" id="9F1C"/>
<dbReference type="PDBsum" id="9F1D"/>
<dbReference type="EMDB" id="EMD-0099"/>
<dbReference type="EMDB" id="EMD-0100"/>
<dbReference type="EMDB" id="EMD-0192"/>
<dbReference type="EMDB" id="EMD-0194"/>
<dbReference type="EMDB" id="EMD-0195"/>
<dbReference type="EMDB" id="EMD-0197"/>
<dbReference type="EMDB" id="EMD-10181"/>
<dbReference type="EMDB" id="EMD-10380"/>
<dbReference type="EMDB" id="EMD-11459"/>
<dbReference type="EMDB" id="EMD-11590"/>
<dbReference type="EMDB" id="EMD-12303"/>
<dbReference type="EMDB" id="EMD-12631"/>
<dbReference type="EMDB" id="EMD-12632"/>
<dbReference type="EMDB" id="EMD-12801"/>
<dbReference type="EMDB" id="EMD-15860"/>
<dbReference type="EMDB" id="EMD-15863"/>
<dbReference type="EMDB" id="EMD-16232"/>
<dbReference type="EMDB" id="EMD-17367"/>
<dbReference type="EMDB" id="EMD-19195"/>
<dbReference type="EMDB" id="EMD-19197"/>
<dbReference type="EMDB" id="EMD-20255"/>
<dbReference type="EMDB" id="EMD-20256"/>
<dbReference type="EMDB" id="EMD-20257"/>
<dbReference type="EMDB" id="EMD-20258"/>
<dbReference type="EMDB" id="EMD-23785"/>
<dbReference type="EMDB" id="EMD-25994"/>
<dbReference type="EMDB" id="EMD-26035"/>
<dbReference type="EMDB" id="EMD-26036"/>
<dbReference type="EMDB" id="EMD-26133"/>
<dbReference type="EMDB" id="EMD-40344"/>
<dbReference type="EMDB" id="EMD-4130"/>
<dbReference type="EMDB" id="EMD-4131"/>
<dbReference type="EMDB" id="EMD-4132"/>
<dbReference type="EMDB" id="EMD-4133"/>
<dbReference type="EMDB" id="EMD-4134"/>
<dbReference type="EMDB" id="EMD-4135"/>
<dbReference type="EMDB" id="EMD-4136"/>
<dbReference type="EMDB" id="EMD-4137"/>
<dbReference type="EMDB" id="EMD-4300"/>
<dbReference type="EMDB" id="EMD-4315"/>
<dbReference type="EMDB" id="EMD-4316"/>
<dbReference type="EMDB" id="EMD-4317"/>
<dbReference type="EMDB" id="EMD-43189"/>
<dbReference type="EMDB" id="EMD-44461"/>
<dbReference type="EMDB" id="EMD-44463"/>
<dbReference type="EMDB" id="EMD-44464"/>
<dbReference type="EMDB" id="EMD-4729"/>
<dbReference type="EMDB" id="EMD-4737"/>
<dbReference type="EMDB" id="EMD-4745"/>
<dbReference type="EMDB" id="EMD-50124"/>
<dbReference type="EMDB" id="EMD-50125"/>
<dbReference type="EMDB" id="EMD-50126"/>
<dbReference type="EMDB" id="EMD-7834"/>
<dbReference type="EMDB" id="EMD-7836"/>
<dbReference type="EMDB" id="EMD-9240"/>
<dbReference type="EMDB" id="EMD-9242"/>
<dbReference type="SMR" id="G1TSG1"/>
<dbReference type="FunCoup" id="G1TSG1">
    <property type="interactions" value="1429"/>
</dbReference>
<dbReference type="IntAct" id="G1TSG1">
    <property type="interactions" value="1"/>
</dbReference>
<dbReference type="STRING" id="9986.ENSOCUP00000019977"/>
<dbReference type="PaxDb" id="9986-ENSOCUP00000019977"/>
<dbReference type="Ensembl" id="ENSOCUT00000028925.2">
    <property type="protein sequence ID" value="ENSOCUP00000019977.1"/>
    <property type="gene ID" value="ENSOCUG00000021439.2"/>
</dbReference>
<dbReference type="KEGG" id="ocu:100354980"/>
<dbReference type="eggNOG" id="KOG3434">
    <property type="taxonomic scope" value="Eukaryota"/>
</dbReference>
<dbReference type="GeneTree" id="ENSGT00940000153314"/>
<dbReference type="HOGENOM" id="CLU_105624_0_1_1"/>
<dbReference type="InParanoid" id="G1TSG1"/>
<dbReference type="OMA" id="IMEIGSF"/>
<dbReference type="OrthoDB" id="10259820at2759"/>
<dbReference type="TreeFam" id="TF313018"/>
<dbReference type="Proteomes" id="UP000001811">
    <property type="component" value="Chromosome 19"/>
</dbReference>
<dbReference type="Bgee" id="ENSOCUG00000021439">
    <property type="expression patterns" value="Expressed in autopod skin and 15 other cell types or tissues"/>
</dbReference>
<dbReference type="GO" id="GO:0005737">
    <property type="term" value="C:cytoplasm"/>
    <property type="evidence" value="ECO:0007669"/>
    <property type="project" value="UniProtKB-SubCell"/>
</dbReference>
<dbReference type="GO" id="GO:1990904">
    <property type="term" value="C:ribonucleoprotein complex"/>
    <property type="evidence" value="ECO:0007669"/>
    <property type="project" value="UniProtKB-KW"/>
</dbReference>
<dbReference type="GO" id="GO:0005840">
    <property type="term" value="C:ribosome"/>
    <property type="evidence" value="ECO:0007669"/>
    <property type="project" value="UniProtKB-KW"/>
</dbReference>
<dbReference type="GO" id="GO:0008201">
    <property type="term" value="F:heparin binding"/>
    <property type="evidence" value="ECO:0007669"/>
    <property type="project" value="UniProtKB-KW"/>
</dbReference>
<dbReference type="GO" id="GO:0003723">
    <property type="term" value="F:RNA binding"/>
    <property type="evidence" value="ECO:0007669"/>
    <property type="project" value="UniProtKB-KW"/>
</dbReference>
<dbReference type="GO" id="GO:0003735">
    <property type="term" value="F:structural constituent of ribosome"/>
    <property type="evidence" value="ECO:0007669"/>
    <property type="project" value="InterPro"/>
</dbReference>
<dbReference type="GO" id="GO:0002181">
    <property type="term" value="P:cytoplasmic translation"/>
    <property type="evidence" value="ECO:0007669"/>
    <property type="project" value="TreeGrafter"/>
</dbReference>
<dbReference type="FunFam" id="3.30.1360.210:FF:000001">
    <property type="entry name" value="60S ribosomal protein L22 1"/>
    <property type="match status" value="1"/>
</dbReference>
<dbReference type="Gene3D" id="3.30.1360.210">
    <property type="match status" value="1"/>
</dbReference>
<dbReference type="InterPro" id="IPR002671">
    <property type="entry name" value="Ribosomal_eL22"/>
</dbReference>
<dbReference type="InterPro" id="IPR038526">
    <property type="entry name" value="Ribosomal_eL22_sf"/>
</dbReference>
<dbReference type="PANTHER" id="PTHR10064">
    <property type="entry name" value="60S RIBOSOMAL PROTEIN L22"/>
    <property type="match status" value="1"/>
</dbReference>
<dbReference type="PANTHER" id="PTHR10064:SF2">
    <property type="entry name" value="LARGE RIBOSOMAL SUBUNIT PROTEIN EL22"/>
    <property type="match status" value="1"/>
</dbReference>
<dbReference type="Pfam" id="PF01776">
    <property type="entry name" value="Ribosomal_L22e"/>
    <property type="match status" value="1"/>
</dbReference>
<comment type="function">
    <text evidence="1">Component of the large ribosomal subunit. The ribosome is a large ribonucleoprotein complex responsible for the synthesis of proteins in the cell.</text>
</comment>
<comment type="subunit">
    <text evidence="3 4 5 6">Component of the large ribosomal subunit.</text>
</comment>
<comment type="subcellular location">
    <subcellularLocation>
        <location evidence="3 4 5 6">Cytoplasm</location>
    </subcellularLocation>
</comment>
<comment type="similarity">
    <text evidence="7">Belongs to the eukaryotic ribosomal protein eL22 family.</text>
</comment>
<keyword id="KW-0002">3D-structure</keyword>
<keyword id="KW-0963">Cytoplasm</keyword>
<keyword id="KW-0358">Heparin-binding</keyword>
<keyword id="KW-0597">Phosphoprotein</keyword>
<keyword id="KW-1185">Reference proteome</keyword>
<keyword id="KW-0687">Ribonucleoprotein</keyword>
<keyword id="KW-0689">Ribosomal protein</keyword>
<keyword id="KW-0694">RNA-binding</keyword>
<organism>
    <name type="scientific">Oryctolagus cuniculus</name>
    <name type="common">Rabbit</name>
    <dbReference type="NCBI Taxonomy" id="9986"/>
    <lineage>
        <taxon>Eukaryota</taxon>
        <taxon>Metazoa</taxon>
        <taxon>Chordata</taxon>
        <taxon>Craniata</taxon>
        <taxon>Vertebrata</taxon>
        <taxon>Euteleostomi</taxon>
        <taxon>Mammalia</taxon>
        <taxon>Eutheria</taxon>
        <taxon>Euarchontoglires</taxon>
        <taxon>Glires</taxon>
        <taxon>Lagomorpha</taxon>
        <taxon>Leporidae</taxon>
        <taxon>Oryctolagus</taxon>
    </lineage>
</organism>
<reference key="1">
    <citation type="journal article" date="2011" name="Nature">
        <title>A high-resolution map of human evolutionary constraint using 29 mammals.</title>
        <authorList>
            <person name="Lindblad-Toh K."/>
            <person name="Garber M."/>
            <person name="Zuk O."/>
            <person name="Lin M.F."/>
            <person name="Parker B.J."/>
            <person name="Washietl S."/>
            <person name="Kheradpour P."/>
            <person name="Ernst J."/>
            <person name="Jordan G."/>
            <person name="Mauceli E."/>
            <person name="Ward L.D."/>
            <person name="Lowe C.B."/>
            <person name="Holloway A.K."/>
            <person name="Clamp M."/>
            <person name="Gnerre S."/>
            <person name="Alfoldi J."/>
            <person name="Beal K."/>
            <person name="Chang J."/>
            <person name="Clawson H."/>
            <person name="Cuff J."/>
            <person name="Di Palma F."/>
            <person name="Fitzgerald S."/>
            <person name="Flicek P."/>
            <person name="Guttman M."/>
            <person name="Hubisz M.J."/>
            <person name="Jaffe D.B."/>
            <person name="Jungreis I."/>
            <person name="Kent W.J."/>
            <person name="Kostka D."/>
            <person name="Lara M."/>
            <person name="Martins A.L."/>
            <person name="Massingham T."/>
            <person name="Moltke I."/>
            <person name="Raney B.J."/>
            <person name="Rasmussen M.D."/>
            <person name="Robinson J."/>
            <person name="Stark A."/>
            <person name="Vilella A.J."/>
            <person name="Wen J."/>
            <person name="Xie X."/>
            <person name="Zody M.C."/>
            <person name="Baldwin J."/>
            <person name="Bloom T."/>
            <person name="Chin C.W."/>
            <person name="Heiman D."/>
            <person name="Nicol R."/>
            <person name="Nusbaum C."/>
            <person name="Young S."/>
            <person name="Wilkinson J."/>
            <person name="Worley K.C."/>
            <person name="Kovar C.L."/>
            <person name="Muzny D.M."/>
            <person name="Gibbs R.A."/>
            <person name="Cree A."/>
            <person name="Dihn H.H."/>
            <person name="Fowler G."/>
            <person name="Jhangiani S."/>
            <person name="Joshi V."/>
            <person name="Lee S."/>
            <person name="Lewis L.R."/>
            <person name="Nazareth L.V."/>
            <person name="Okwuonu G."/>
            <person name="Santibanez J."/>
            <person name="Warren W.C."/>
            <person name="Mardis E.R."/>
            <person name="Weinstock G.M."/>
            <person name="Wilson R.K."/>
            <person name="Delehaunty K."/>
            <person name="Dooling D."/>
            <person name="Fronik C."/>
            <person name="Fulton L."/>
            <person name="Fulton B."/>
            <person name="Graves T."/>
            <person name="Minx P."/>
            <person name="Sodergren E."/>
            <person name="Birney E."/>
            <person name="Margulies E.H."/>
            <person name="Herrero J."/>
            <person name="Green E.D."/>
            <person name="Haussler D."/>
            <person name="Siepel A."/>
            <person name="Goldman N."/>
            <person name="Pollard K.S."/>
            <person name="Pedersen J.S."/>
            <person name="Lander E.S."/>
            <person name="Kellis M."/>
        </authorList>
    </citation>
    <scope>NUCLEOTIDE SEQUENCE [LARGE SCALE GENOMIC DNA]</scope>
    <source>
        <strain>Thorbecke</strain>
    </source>
</reference>
<reference evidence="8" key="2">
    <citation type="journal article" date="2018" name="Elife">
        <title>Dual tRNA mimicry in the Cricket paralysis virus IRES uncovers an unexpected similarity with the Hepatitis C Virus IRES.</title>
        <authorList>
            <person name="Pisareva V.P."/>
            <person name="Pisarev A.V."/>
            <person name="Fernandez I.S."/>
        </authorList>
    </citation>
    <scope>STRUCTURE BY ELECTRON MICROSCOPY (3.20 ANGSTROMS) OF RIBOSOME</scope>
    <scope>SUBUNIT</scope>
    <scope>SUBCELLULAR LOCATION</scope>
</reference>
<reference evidence="11" key="3">
    <citation type="journal article" date="2019" name="Elife">
        <title>Structural and mutational analysis of the ribosome-arresting human XBP1u.</title>
        <authorList>
            <person name="Shanmuganathan V."/>
            <person name="Schiller N."/>
            <person name="Magoulopoulou A."/>
            <person name="Cheng J."/>
            <person name="Braunger K."/>
            <person name="Cymer F."/>
            <person name="Berninghausen O."/>
            <person name="Beatrix B."/>
            <person name="Kohno K."/>
            <person name="von Heijne G."/>
            <person name="Beckmann R."/>
        </authorList>
    </citation>
    <scope>STRUCTURE BY ELECTRON MICROSCOPY (3.00 ANGSTROMS) OF RIBOSOME</scope>
    <scope>SUBCELLULAR LOCATION</scope>
    <scope>SUBUNIT</scope>
</reference>
<reference evidence="9 10" key="4">
    <citation type="journal article" date="2019" name="EMBO J.">
        <title>The Israeli acute paralysis virus IRES captures host ribosomes by mimicking a ribosomal state with hybrid tRNAs.</title>
        <authorList>
            <person name="Acosta-Reyes F."/>
            <person name="Neupane R."/>
            <person name="Frank J."/>
            <person name="Fernandez I.S."/>
        </authorList>
    </citation>
    <scope>STRUCTURE BY ELECTRON MICROSCOPY (3.10 ANGSTROMS) OF RIBOSOME</scope>
    <scope>SUBUNIT</scope>
    <scope>SUBCELLULAR LOCATION</scope>
</reference>
<reference evidence="12 13" key="5">
    <citation type="journal article" date="2020" name="Cell Rep.">
        <title>The Halastavi arva virus intergenic region IRES promotes translation by the simplest possible initiation mechanism.</title>
        <authorList>
            <person name="Abaeva I.S."/>
            <person name="Vicens Q."/>
            <person name="Bochler A."/>
            <person name="Soufari H."/>
            <person name="Simonetti A."/>
            <person name="Pestova T.V."/>
            <person name="Hashem Y."/>
            <person name="Hellen C.U.T."/>
        </authorList>
    </citation>
    <scope>STRUCTURE BY ELECTRON MICROSCOPY (3.49 ANGSTROMS) OF RIBOSOME</scope>
    <scope>SUBCELLULAR LOCATION</scope>
    <scope>SUBUNIT</scope>
</reference>
<name>RL22_RABIT</name>
<accession>G1TSG1</accession>
<sequence>MAPVKKLVAKGGKKKKQVLKFTLDCTHPVEDRIMDEANSEQFLQERIKVNGKARNLGGGAVTIERSKSKITVTSEVPFSKRYLKYLTKKYLKKNNLHDWLRVVANSKESYELRYFQINQDEEEEEDED</sequence>